<sequence length="102" mass="11056">MDVVARLASQRAVVIFSKSTCCMSHAIKRLFYEQGVSPAIVEIDQDMYGKDIEWALARLGCSPTVPAVFVGGKFVGTANTVMTLHLNGSLKILLKEAGALWL</sequence>
<proteinExistence type="inferred from homology"/>
<evidence type="ECO:0000250" key="1"/>
<evidence type="ECO:0000255" key="2"/>
<evidence type="ECO:0000255" key="3">
    <source>
        <dbReference type="PROSITE-ProRule" id="PRU00686"/>
    </source>
</evidence>
<evidence type="ECO:0000305" key="4"/>
<comment type="function">
    <text evidence="4">May only reduce GSH-thiol disulfides, but not protein disulfides.</text>
</comment>
<comment type="subcellular location">
    <subcellularLocation>
        <location evidence="1">Cytoplasm</location>
    </subcellularLocation>
    <subcellularLocation>
        <location evidence="1">Nucleus</location>
    </subcellularLocation>
</comment>
<comment type="similarity">
    <text evidence="4">Belongs to the glutaredoxin family. CC-type subfamily.</text>
</comment>
<comment type="sequence caution" evidence="4">
    <conflict type="erroneous termination">
        <sequence resource="EMBL-CDS" id="ABK28101"/>
    </conflict>
    <text>Extended C-terminus.</text>
</comment>
<gene>
    <name type="primary">GRXS10</name>
    <name type="synonym">ROXY3</name>
    <name type="ordered locus">At3g21460</name>
    <name type="ORF">MHC9.13</name>
</gene>
<accession>Q9LIF1</accession>
<accession>A0ME06</accession>
<organism>
    <name type="scientific">Arabidopsis thaliana</name>
    <name type="common">Mouse-ear cress</name>
    <dbReference type="NCBI Taxonomy" id="3702"/>
    <lineage>
        <taxon>Eukaryota</taxon>
        <taxon>Viridiplantae</taxon>
        <taxon>Streptophyta</taxon>
        <taxon>Embryophyta</taxon>
        <taxon>Tracheophyta</taxon>
        <taxon>Spermatophyta</taxon>
        <taxon>Magnoliopsida</taxon>
        <taxon>eudicotyledons</taxon>
        <taxon>Gunneridae</taxon>
        <taxon>Pentapetalae</taxon>
        <taxon>rosids</taxon>
        <taxon>malvids</taxon>
        <taxon>Brassicales</taxon>
        <taxon>Brassicaceae</taxon>
        <taxon>Camelineae</taxon>
        <taxon>Arabidopsis</taxon>
    </lineage>
</organism>
<keyword id="KW-0001">2Fe-2S</keyword>
<keyword id="KW-0963">Cytoplasm</keyword>
<keyword id="KW-0408">Iron</keyword>
<keyword id="KW-0411">Iron-sulfur</keyword>
<keyword id="KW-0479">Metal-binding</keyword>
<keyword id="KW-0539">Nucleus</keyword>
<keyword id="KW-0676">Redox-active center</keyword>
<keyword id="KW-1185">Reference proteome</keyword>
<name>GRS10_ARATH</name>
<dbReference type="EMBL" id="FJ611903">
    <property type="protein sequence ID" value="ACO50408.1"/>
    <property type="molecule type" value="mRNA"/>
</dbReference>
<dbReference type="EMBL" id="AP001305">
    <property type="protein sequence ID" value="BAB03058.1"/>
    <property type="molecule type" value="Genomic_DNA"/>
</dbReference>
<dbReference type="EMBL" id="CP002686">
    <property type="protein sequence ID" value="AEE76510.1"/>
    <property type="molecule type" value="Genomic_DNA"/>
</dbReference>
<dbReference type="EMBL" id="DQ487674">
    <property type="protein sequence ID" value="ABF59441.1"/>
    <property type="molecule type" value="Genomic_DNA"/>
</dbReference>
<dbReference type="EMBL" id="DQ652772">
    <property type="protein sequence ID" value="ABK28101.1"/>
    <property type="status" value="ALT_SEQ"/>
    <property type="molecule type" value="Genomic_DNA"/>
</dbReference>
<dbReference type="RefSeq" id="NP_001078198.1">
    <property type="nucleotide sequence ID" value="NM_001084729.3"/>
</dbReference>
<dbReference type="SMR" id="Q9LIF1"/>
<dbReference type="BioGRID" id="624229">
    <property type="interactions" value="1"/>
</dbReference>
<dbReference type="FunCoup" id="Q9LIF1">
    <property type="interactions" value="34"/>
</dbReference>
<dbReference type="STRING" id="3702.Q9LIF1"/>
<dbReference type="PaxDb" id="3702-AT3G21460.1"/>
<dbReference type="EnsemblPlants" id="AT3G21460.1">
    <property type="protein sequence ID" value="AT3G21460.1"/>
    <property type="gene ID" value="AT3G21460"/>
</dbReference>
<dbReference type="GeneID" id="5008019"/>
<dbReference type="Gramene" id="AT3G21460.1">
    <property type="protein sequence ID" value="AT3G21460.1"/>
    <property type="gene ID" value="AT3G21460"/>
</dbReference>
<dbReference type="KEGG" id="ath:AT3G21460"/>
<dbReference type="Araport" id="AT3G21460"/>
<dbReference type="TAIR" id="AT3G21460">
    <property type="gene designation" value="ROXY3"/>
</dbReference>
<dbReference type="eggNOG" id="KOG1752">
    <property type="taxonomic scope" value="Eukaryota"/>
</dbReference>
<dbReference type="HOGENOM" id="CLU_026126_6_0_1"/>
<dbReference type="InParanoid" id="Q9LIF1"/>
<dbReference type="OMA" id="EMEYALM"/>
<dbReference type="OrthoDB" id="418495at2759"/>
<dbReference type="PhylomeDB" id="Q9LIF1"/>
<dbReference type="PRO" id="PR:Q9LIF1"/>
<dbReference type="Proteomes" id="UP000006548">
    <property type="component" value="Chromosome 3"/>
</dbReference>
<dbReference type="ExpressionAtlas" id="Q9LIF1">
    <property type="expression patterns" value="baseline and differential"/>
</dbReference>
<dbReference type="GO" id="GO:0005737">
    <property type="term" value="C:cytoplasm"/>
    <property type="evidence" value="ECO:0007669"/>
    <property type="project" value="UniProtKB-SubCell"/>
</dbReference>
<dbReference type="GO" id="GO:0005634">
    <property type="term" value="C:nucleus"/>
    <property type="evidence" value="ECO:0007669"/>
    <property type="project" value="UniProtKB-SubCell"/>
</dbReference>
<dbReference type="GO" id="GO:0051537">
    <property type="term" value="F:2 iron, 2 sulfur cluster binding"/>
    <property type="evidence" value="ECO:0007669"/>
    <property type="project" value="UniProtKB-KW"/>
</dbReference>
<dbReference type="GO" id="GO:0046872">
    <property type="term" value="F:metal ion binding"/>
    <property type="evidence" value="ECO:0007669"/>
    <property type="project" value="UniProtKB-KW"/>
</dbReference>
<dbReference type="GO" id="GO:0000122">
    <property type="term" value="P:negative regulation of transcription by RNA polymerase II"/>
    <property type="evidence" value="ECO:0000314"/>
    <property type="project" value="TAIR"/>
</dbReference>
<dbReference type="CDD" id="cd03419">
    <property type="entry name" value="GRX_GRXh_1_2_like"/>
    <property type="match status" value="1"/>
</dbReference>
<dbReference type="FunFam" id="3.40.30.10:FF:000028">
    <property type="entry name" value="Glutaredoxin family protein"/>
    <property type="match status" value="1"/>
</dbReference>
<dbReference type="Gene3D" id="3.40.30.10">
    <property type="entry name" value="Glutaredoxin"/>
    <property type="match status" value="1"/>
</dbReference>
<dbReference type="InterPro" id="IPR011905">
    <property type="entry name" value="GlrX-like_pln_2"/>
</dbReference>
<dbReference type="InterPro" id="IPR002109">
    <property type="entry name" value="Glutaredoxin"/>
</dbReference>
<dbReference type="InterPro" id="IPR036249">
    <property type="entry name" value="Thioredoxin-like_sf"/>
</dbReference>
<dbReference type="NCBIfam" id="TIGR02189">
    <property type="entry name" value="GlrX-like_plant"/>
    <property type="match status" value="1"/>
</dbReference>
<dbReference type="PANTHER" id="PTHR10168">
    <property type="entry name" value="GLUTAREDOXIN"/>
    <property type="match status" value="1"/>
</dbReference>
<dbReference type="Pfam" id="PF00462">
    <property type="entry name" value="Glutaredoxin"/>
    <property type="match status" value="1"/>
</dbReference>
<dbReference type="SUPFAM" id="SSF52833">
    <property type="entry name" value="Thioredoxin-like"/>
    <property type="match status" value="1"/>
</dbReference>
<dbReference type="PROSITE" id="PS51354">
    <property type="entry name" value="GLUTAREDOXIN_2"/>
    <property type="match status" value="1"/>
</dbReference>
<reference key="1">
    <citation type="journal article" date="2009" name="Plant Cell">
        <title>Nuclear activity of ROXY1, a glutaredoxin interacting with TGA factors, is required for petal development in Arabidopsis thaliana.</title>
        <authorList>
            <person name="Li S."/>
            <person name="Lauri A."/>
            <person name="Ziemann M."/>
            <person name="Busch A."/>
            <person name="Bhave M."/>
            <person name="Zachgo S."/>
        </authorList>
    </citation>
    <scope>NUCLEOTIDE SEQUENCE [MRNA]</scope>
    <scope>GENE FAMILY</scope>
</reference>
<reference key="2">
    <citation type="journal article" date="2000" name="DNA Res.">
        <title>Structural analysis of Arabidopsis thaliana chromosome 3. II. Sequence features of the 4,251,695 bp regions covered by 90 P1, TAC and BAC clones.</title>
        <authorList>
            <person name="Kaneko T."/>
            <person name="Katoh T."/>
            <person name="Sato S."/>
            <person name="Nakamura Y."/>
            <person name="Asamizu E."/>
            <person name="Tabata S."/>
        </authorList>
    </citation>
    <scope>NUCLEOTIDE SEQUENCE [LARGE SCALE GENOMIC DNA]</scope>
    <source>
        <strain>cv. Columbia</strain>
    </source>
</reference>
<reference key="3">
    <citation type="journal article" date="2017" name="Plant J.">
        <title>Araport11: a complete reannotation of the Arabidopsis thaliana reference genome.</title>
        <authorList>
            <person name="Cheng C.Y."/>
            <person name="Krishnakumar V."/>
            <person name="Chan A.P."/>
            <person name="Thibaud-Nissen F."/>
            <person name="Schobel S."/>
            <person name="Town C.D."/>
        </authorList>
    </citation>
    <scope>GENOME REANNOTATION</scope>
    <source>
        <strain>cv. Columbia</strain>
    </source>
</reference>
<reference key="4">
    <citation type="journal article" date="2006" name="Plant Biotechnol. J.">
        <title>Simultaneous high-throughput recombinational cloning of open reading frames in closed and open configurations.</title>
        <authorList>
            <person name="Underwood B.A."/>
            <person name="Vanderhaeghen R."/>
            <person name="Whitford R."/>
            <person name="Town C.D."/>
            <person name="Hilson P."/>
        </authorList>
    </citation>
    <scope>NUCLEOTIDE SEQUENCE [LARGE SCALE GENOMIC DNA]</scope>
    <source>
        <strain>cv. Columbia</strain>
    </source>
</reference>
<reference key="5">
    <citation type="journal article" date="2004" name="Cell. Mol. Life Sci.">
        <title>Plant glutaredoxins: still mysterious reducing systems.</title>
        <authorList>
            <person name="Rouhier N."/>
            <person name="Gelhaye E."/>
            <person name="Jacquot J.-P."/>
        </authorList>
    </citation>
    <scope>GENE FAMILY</scope>
    <scope>NOMENCLATURE</scope>
</reference>
<reference key="6">
    <citation type="journal article" date="2006" name="J. Exp. Bot.">
        <title>Genome-wide analysis of plant glutaredoxin systems.</title>
        <authorList>
            <person name="Rouhier N."/>
            <person name="Couturier J."/>
            <person name="Jacquot J.-P."/>
        </authorList>
    </citation>
    <scope>GENE FAMILY</scope>
</reference>
<feature type="chain" id="PRO_0000398151" description="Monothiol glutaredoxin-S10">
    <location>
        <begin position="1"/>
        <end position="102"/>
    </location>
</feature>
<feature type="domain" description="Glutaredoxin" evidence="3">
    <location>
        <begin position="1"/>
        <end position="101"/>
    </location>
</feature>
<feature type="short sequence motif" description="Responsive for interaction with TGA factors" evidence="1">
    <location>
        <begin position="99"/>
        <end position="102"/>
    </location>
</feature>
<feature type="binding site" evidence="2">
    <location>
        <position position="21"/>
    </location>
    <ligand>
        <name>[2Fe-2S] cluster</name>
        <dbReference type="ChEBI" id="CHEBI:190135"/>
        <note>ligand shared between dimeric partners</note>
    </ligand>
</feature>
<protein>
    <recommendedName>
        <fullName>Monothiol glutaredoxin-S10</fullName>
        <shortName>AtGrxS10</shortName>
    </recommendedName>
    <alternativeName>
        <fullName>Protein ROXY 3</fullName>
    </alternativeName>
</protein>